<gene>
    <name evidence="1" type="primary">pheS</name>
    <name type="ordered locus">Bcep18194_A4619</name>
</gene>
<dbReference type="EC" id="6.1.1.20" evidence="1"/>
<dbReference type="EMBL" id="CP000151">
    <property type="protein sequence ID" value="ABB08215.1"/>
    <property type="molecule type" value="Genomic_DNA"/>
</dbReference>
<dbReference type="SMR" id="Q39H51"/>
<dbReference type="KEGG" id="bur:Bcep18194_A4619"/>
<dbReference type="PATRIC" id="fig|482957.22.peg.1524"/>
<dbReference type="HOGENOM" id="CLU_025086_0_1_4"/>
<dbReference type="Proteomes" id="UP000002705">
    <property type="component" value="Chromosome 1"/>
</dbReference>
<dbReference type="GO" id="GO:0005737">
    <property type="term" value="C:cytoplasm"/>
    <property type="evidence" value="ECO:0007669"/>
    <property type="project" value="UniProtKB-SubCell"/>
</dbReference>
<dbReference type="GO" id="GO:0005524">
    <property type="term" value="F:ATP binding"/>
    <property type="evidence" value="ECO:0007669"/>
    <property type="project" value="UniProtKB-UniRule"/>
</dbReference>
<dbReference type="GO" id="GO:0000287">
    <property type="term" value="F:magnesium ion binding"/>
    <property type="evidence" value="ECO:0007669"/>
    <property type="project" value="UniProtKB-UniRule"/>
</dbReference>
<dbReference type="GO" id="GO:0004826">
    <property type="term" value="F:phenylalanine-tRNA ligase activity"/>
    <property type="evidence" value="ECO:0007669"/>
    <property type="project" value="UniProtKB-UniRule"/>
</dbReference>
<dbReference type="GO" id="GO:0000049">
    <property type="term" value="F:tRNA binding"/>
    <property type="evidence" value="ECO:0007669"/>
    <property type="project" value="InterPro"/>
</dbReference>
<dbReference type="GO" id="GO:0006432">
    <property type="term" value="P:phenylalanyl-tRNA aminoacylation"/>
    <property type="evidence" value="ECO:0007669"/>
    <property type="project" value="UniProtKB-UniRule"/>
</dbReference>
<dbReference type="CDD" id="cd00496">
    <property type="entry name" value="PheRS_alpha_core"/>
    <property type="match status" value="1"/>
</dbReference>
<dbReference type="FunFam" id="3.30.930.10:FF:000003">
    <property type="entry name" value="Phenylalanine--tRNA ligase alpha subunit"/>
    <property type="match status" value="1"/>
</dbReference>
<dbReference type="Gene3D" id="3.30.930.10">
    <property type="entry name" value="Bira Bifunctional Protein, Domain 2"/>
    <property type="match status" value="1"/>
</dbReference>
<dbReference type="HAMAP" id="MF_00281">
    <property type="entry name" value="Phe_tRNA_synth_alpha1"/>
    <property type="match status" value="1"/>
</dbReference>
<dbReference type="InterPro" id="IPR006195">
    <property type="entry name" value="aa-tRNA-synth_II"/>
</dbReference>
<dbReference type="InterPro" id="IPR045864">
    <property type="entry name" value="aa-tRNA-synth_II/BPL/LPL"/>
</dbReference>
<dbReference type="InterPro" id="IPR004529">
    <property type="entry name" value="Phe-tRNA-synth_IIc_asu"/>
</dbReference>
<dbReference type="InterPro" id="IPR004188">
    <property type="entry name" value="Phe-tRNA_ligase_II_N"/>
</dbReference>
<dbReference type="InterPro" id="IPR022911">
    <property type="entry name" value="Phe_tRNA_ligase_alpha1_bac"/>
</dbReference>
<dbReference type="InterPro" id="IPR002319">
    <property type="entry name" value="Phenylalanyl-tRNA_Synthase"/>
</dbReference>
<dbReference type="InterPro" id="IPR010978">
    <property type="entry name" value="tRNA-bd_arm"/>
</dbReference>
<dbReference type="NCBIfam" id="TIGR00468">
    <property type="entry name" value="pheS"/>
    <property type="match status" value="1"/>
</dbReference>
<dbReference type="PANTHER" id="PTHR11538:SF41">
    <property type="entry name" value="PHENYLALANINE--TRNA LIGASE, MITOCHONDRIAL"/>
    <property type="match status" value="1"/>
</dbReference>
<dbReference type="PANTHER" id="PTHR11538">
    <property type="entry name" value="PHENYLALANYL-TRNA SYNTHETASE"/>
    <property type="match status" value="1"/>
</dbReference>
<dbReference type="Pfam" id="PF02912">
    <property type="entry name" value="Phe_tRNA-synt_N"/>
    <property type="match status" value="1"/>
</dbReference>
<dbReference type="Pfam" id="PF01409">
    <property type="entry name" value="tRNA-synt_2d"/>
    <property type="match status" value="1"/>
</dbReference>
<dbReference type="SUPFAM" id="SSF55681">
    <property type="entry name" value="Class II aaRS and biotin synthetases"/>
    <property type="match status" value="1"/>
</dbReference>
<dbReference type="SUPFAM" id="SSF46589">
    <property type="entry name" value="tRNA-binding arm"/>
    <property type="match status" value="1"/>
</dbReference>
<dbReference type="PROSITE" id="PS50862">
    <property type="entry name" value="AA_TRNA_LIGASE_II"/>
    <property type="match status" value="1"/>
</dbReference>
<feature type="chain" id="PRO_0000231970" description="Phenylalanine--tRNA ligase alpha subunit">
    <location>
        <begin position="1"/>
        <end position="345"/>
    </location>
</feature>
<feature type="binding site" evidence="1">
    <location>
        <position position="266"/>
    </location>
    <ligand>
        <name>Mg(2+)</name>
        <dbReference type="ChEBI" id="CHEBI:18420"/>
        <note>shared with beta subunit</note>
    </ligand>
</feature>
<reference key="1">
    <citation type="submission" date="2005-10" db="EMBL/GenBank/DDBJ databases">
        <title>Complete sequence of chromosome 1 of Burkholderia sp. 383.</title>
        <authorList>
            <consortium name="US DOE Joint Genome Institute"/>
            <person name="Copeland A."/>
            <person name="Lucas S."/>
            <person name="Lapidus A."/>
            <person name="Barry K."/>
            <person name="Detter J.C."/>
            <person name="Glavina T."/>
            <person name="Hammon N."/>
            <person name="Israni S."/>
            <person name="Pitluck S."/>
            <person name="Chain P."/>
            <person name="Malfatti S."/>
            <person name="Shin M."/>
            <person name="Vergez L."/>
            <person name="Schmutz J."/>
            <person name="Larimer F."/>
            <person name="Land M."/>
            <person name="Kyrpides N."/>
            <person name="Lykidis A."/>
            <person name="Richardson P."/>
        </authorList>
    </citation>
    <scope>NUCLEOTIDE SEQUENCE [LARGE SCALE GENOMIC DNA]</scope>
    <source>
        <strain>ATCC 17760 / DSM 23089 / LMG 22485 / NCIMB 9086 / R18194 / 383</strain>
    </source>
</reference>
<name>SYFA_BURL3</name>
<keyword id="KW-0030">Aminoacyl-tRNA synthetase</keyword>
<keyword id="KW-0067">ATP-binding</keyword>
<keyword id="KW-0963">Cytoplasm</keyword>
<keyword id="KW-0436">Ligase</keyword>
<keyword id="KW-0460">Magnesium</keyword>
<keyword id="KW-0479">Metal-binding</keyword>
<keyword id="KW-0547">Nucleotide-binding</keyword>
<keyword id="KW-0648">Protein biosynthesis</keyword>
<evidence type="ECO:0000255" key="1">
    <source>
        <dbReference type="HAMAP-Rule" id="MF_00281"/>
    </source>
</evidence>
<organism>
    <name type="scientific">Burkholderia lata (strain ATCC 17760 / DSM 23089 / LMG 22485 / NCIMB 9086 / R18194 / 383)</name>
    <dbReference type="NCBI Taxonomy" id="482957"/>
    <lineage>
        <taxon>Bacteria</taxon>
        <taxon>Pseudomonadati</taxon>
        <taxon>Pseudomonadota</taxon>
        <taxon>Betaproteobacteria</taxon>
        <taxon>Burkholderiales</taxon>
        <taxon>Burkholderiaceae</taxon>
        <taxon>Burkholderia</taxon>
        <taxon>Burkholderia cepacia complex</taxon>
    </lineage>
</organism>
<sequence>MTLEMMGSMDLDQIVADAQQSFEQAADITTLENEKARFLGKSGALTELLKGLGKLDPEARKTEGARINVVKQQVEAALTARRQALADALLNQRLTAEAIDVTLPGRGAGAGSLHPVMRTWERVEQIFGSIGFDVADGPEIETDWYNFTSLNSPENHPARSMQDTFYVEGKDADGRQLLLRTHTSPMQVRYARMNRPPIKVIAPGRTYRVDSDATHSPMFNQVEGLWIDENISFADLKGVYTDFLKKFFERDDILVRFRPSYFPFTEPSAEIDMMFEQGKNAGKWLEISGSGQVHPTVIRNMGLDPERYIGFAFGSGLERLTMLRYGVQDLRLFFENDLRFLRQFA</sequence>
<protein>
    <recommendedName>
        <fullName evidence="1">Phenylalanine--tRNA ligase alpha subunit</fullName>
        <ecNumber evidence="1">6.1.1.20</ecNumber>
    </recommendedName>
    <alternativeName>
        <fullName evidence="1">Phenylalanyl-tRNA synthetase alpha subunit</fullName>
        <shortName evidence="1">PheRS</shortName>
    </alternativeName>
</protein>
<comment type="catalytic activity">
    <reaction evidence="1">
        <text>tRNA(Phe) + L-phenylalanine + ATP = L-phenylalanyl-tRNA(Phe) + AMP + diphosphate + H(+)</text>
        <dbReference type="Rhea" id="RHEA:19413"/>
        <dbReference type="Rhea" id="RHEA-COMP:9668"/>
        <dbReference type="Rhea" id="RHEA-COMP:9699"/>
        <dbReference type="ChEBI" id="CHEBI:15378"/>
        <dbReference type="ChEBI" id="CHEBI:30616"/>
        <dbReference type="ChEBI" id="CHEBI:33019"/>
        <dbReference type="ChEBI" id="CHEBI:58095"/>
        <dbReference type="ChEBI" id="CHEBI:78442"/>
        <dbReference type="ChEBI" id="CHEBI:78531"/>
        <dbReference type="ChEBI" id="CHEBI:456215"/>
        <dbReference type="EC" id="6.1.1.20"/>
    </reaction>
</comment>
<comment type="cofactor">
    <cofactor evidence="1">
        <name>Mg(2+)</name>
        <dbReference type="ChEBI" id="CHEBI:18420"/>
    </cofactor>
    <text evidence="1">Binds 2 magnesium ions per tetramer.</text>
</comment>
<comment type="subunit">
    <text evidence="1">Tetramer of two alpha and two beta subunits.</text>
</comment>
<comment type="subcellular location">
    <subcellularLocation>
        <location evidence="1">Cytoplasm</location>
    </subcellularLocation>
</comment>
<comment type="similarity">
    <text evidence="1">Belongs to the class-II aminoacyl-tRNA synthetase family. Phe-tRNA synthetase alpha subunit type 1 subfamily.</text>
</comment>
<proteinExistence type="inferred from homology"/>
<accession>Q39H51</accession>